<comment type="function">
    <text evidence="6">Component of the mitochondrial ribosome (mitoribosome), a dedicated translation machinery responsible for the synthesis of mitochondrial genome-encoded proteins, including at least some of the essential transmembrane subunits of the mitochondrial respiratory chain. The mitoribosomes are attached to the mitochondrial inner membrane and translation products are cotranslationally integrated into the membrane.</text>
</comment>
<comment type="subunit">
    <text evidence="2 3">Component of the mitochondrial large ribosomal subunit (mt-LSU). Mature N.crassa 74S mitochondrial ribosomes consist of a small (37S) and a large (54S) subunit. The 37S small subunit contains a 16S ribosomal RNA (16S mt-rRNA) and 32 different proteins. The 54S large subunit contains a 23S rRNA (23S mt-rRNA) and 42 different proteins.</text>
</comment>
<comment type="subcellular location">
    <subcellularLocation>
        <location evidence="2 3">Mitochondrion</location>
    </subcellularLocation>
</comment>
<comment type="similarity">
    <text evidence="5">Belongs to the mitochondrion-specific ribosomal protein mL50 family.</text>
</comment>
<feature type="chain" id="PRO_0000458591" description="Large ribosomal subunit protein mL50">
    <location>
        <begin position="1"/>
        <end position="443"/>
    </location>
</feature>
<feature type="region of interest" description="Disordered" evidence="1">
    <location>
        <begin position="121"/>
        <end position="145"/>
    </location>
</feature>
<feature type="compositionally biased region" description="Basic and acidic residues" evidence="1">
    <location>
        <begin position="126"/>
        <end position="135"/>
    </location>
</feature>
<evidence type="ECO:0000256" key="1">
    <source>
        <dbReference type="SAM" id="MobiDB-lite"/>
    </source>
</evidence>
<evidence type="ECO:0000269" key="2">
    <source>
    </source>
</evidence>
<evidence type="ECO:0000269" key="3">
    <source>
    </source>
</evidence>
<evidence type="ECO:0000303" key="4">
    <source>
    </source>
</evidence>
<evidence type="ECO:0000305" key="5"/>
<evidence type="ECO:0000305" key="6">
    <source>
    </source>
</evidence>
<evidence type="ECO:0007744" key="7">
    <source>
        <dbReference type="PDB" id="6YWE"/>
    </source>
</evidence>
<evidence type="ECO:0007744" key="8">
    <source>
        <dbReference type="PDB" id="6YWS"/>
    </source>
</evidence>
<keyword id="KW-0002">3D-structure</keyword>
<keyword id="KW-0496">Mitochondrion</keyword>
<keyword id="KW-1185">Reference proteome</keyword>
<keyword id="KW-0687">Ribonucleoprotein</keyword>
<keyword id="KW-0689">Ribosomal protein</keyword>
<protein>
    <recommendedName>
        <fullName evidence="4">Large ribosomal subunit protein mL50</fullName>
    </recommendedName>
</protein>
<name>RM13_NEUCR</name>
<organism>
    <name type="scientific">Neurospora crassa (strain ATCC 24698 / 74-OR23-1A / CBS 708.71 / DSM 1257 / FGSC 987)</name>
    <dbReference type="NCBI Taxonomy" id="367110"/>
    <lineage>
        <taxon>Eukaryota</taxon>
        <taxon>Fungi</taxon>
        <taxon>Dikarya</taxon>
        <taxon>Ascomycota</taxon>
        <taxon>Pezizomycotina</taxon>
        <taxon>Sordariomycetes</taxon>
        <taxon>Sordariomycetidae</taxon>
        <taxon>Sordariales</taxon>
        <taxon>Sordariaceae</taxon>
        <taxon>Neurospora</taxon>
    </lineage>
</organism>
<dbReference type="EMBL" id="CM002241">
    <property type="protein sequence ID" value="EAA31278.2"/>
    <property type="molecule type" value="Genomic_DNA"/>
</dbReference>
<dbReference type="RefSeq" id="XP_960514.2">
    <property type="nucleotide sequence ID" value="XM_955421.3"/>
</dbReference>
<dbReference type="PDB" id="6YWE">
    <property type="method" value="EM"/>
    <property type="resolution" value="2.99 A"/>
    <property type="chains" value="8=1-443"/>
</dbReference>
<dbReference type="PDB" id="6YWS">
    <property type="method" value="EM"/>
    <property type="resolution" value="2.74 A"/>
    <property type="chains" value="8=1-443"/>
</dbReference>
<dbReference type="PDB" id="6YWV">
    <property type="method" value="EM"/>
    <property type="resolution" value="3.03 A"/>
    <property type="chains" value="8=1-443"/>
</dbReference>
<dbReference type="PDB" id="6YWX">
    <property type="method" value="EM"/>
    <property type="resolution" value="3.10 A"/>
    <property type="chains" value="8=1-443"/>
</dbReference>
<dbReference type="PDB" id="6YWY">
    <property type="method" value="EM"/>
    <property type="resolution" value="3.05 A"/>
    <property type="chains" value="8=1-443"/>
</dbReference>
<dbReference type="PDBsum" id="6YWE"/>
<dbReference type="PDBsum" id="6YWS"/>
<dbReference type="PDBsum" id="6YWV"/>
<dbReference type="PDBsum" id="6YWX"/>
<dbReference type="PDBsum" id="6YWY"/>
<dbReference type="EMDB" id="EMD-10965"/>
<dbReference type="EMDB" id="EMD-10973"/>
<dbReference type="EMDB" id="EMD-10977"/>
<dbReference type="EMDB" id="EMD-10978"/>
<dbReference type="EMDB" id="EMD-10985"/>
<dbReference type="SMR" id="Q7S711"/>
<dbReference type="STRING" id="367110.Q7S711"/>
<dbReference type="PaxDb" id="5141-EFNCRP00000005492"/>
<dbReference type="EnsemblFungi" id="EAA31278">
    <property type="protein sequence ID" value="EAA31278"/>
    <property type="gene ID" value="NCU05552"/>
</dbReference>
<dbReference type="GeneID" id="3876661"/>
<dbReference type="KEGG" id="ncr:NCU05552"/>
<dbReference type="VEuPathDB" id="FungiDB:NCU05552"/>
<dbReference type="HOGENOM" id="CLU_034472_0_0_1"/>
<dbReference type="InParanoid" id="Q7S711"/>
<dbReference type="OrthoDB" id="6220758at2759"/>
<dbReference type="Proteomes" id="UP000001805">
    <property type="component" value="Chromosome 5, Linkage Group VI"/>
</dbReference>
<dbReference type="GO" id="GO:0005739">
    <property type="term" value="C:mitochondrion"/>
    <property type="evidence" value="ECO:0007669"/>
    <property type="project" value="UniProtKB-SubCell"/>
</dbReference>
<dbReference type="GO" id="GO:1990904">
    <property type="term" value="C:ribonucleoprotein complex"/>
    <property type="evidence" value="ECO:0007669"/>
    <property type="project" value="UniProtKB-KW"/>
</dbReference>
<dbReference type="GO" id="GO:0005840">
    <property type="term" value="C:ribosome"/>
    <property type="evidence" value="ECO:0007669"/>
    <property type="project" value="UniProtKB-KW"/>
</dbReference>
<dbReference type="InterPro" id="IPR018305">
    <property type="entry name" value="Ribosomal_m50"/>
</dbReference>
<dbReference type="Pfam" id="PF10501">
    <property type="entry name" value="Ribosomal_L50"/>
    <property type="match status" value="1"/>
</dbReference>
<accession>Q7S711</accession>
<sequence length="443" mass="49676">MRRIPRIPSTASALCSSSSSVASTSAAPLRTLRAAADSSSICQSCSFSTQTSATRNRVWQNTVQTQRRCASTVTETTPEAPVAAAAAETATESTETVEQQRKRKGGFFETQRQVNLVLPGQPTRADAPEKIRDPNYEPATSGAGLQEIGGMSDWWSKPEHFRDGGKQFEYQGFAPQEKITDPRLLKVILRRALAEGLALKKFGANPKNPADMASIIGNGDHWQRTVSVEMCRGENGELSLKNESDLQKVWILMRNAAEKTYYQREWQEEINRLRSLGEKEQAKQLLEEGKKLGYRLKSEEGSLVKLTVDEAVELRKSWNNDWKEAIIRDPVVKFYAAKRIQKMTGHILSDGKLTSIQTVANFMDALVTPPKPKKLAEQIEQSSILPELPNVKVYPRRVTPVDKERMVGRWKVIQKELQKRELPVLGTGNHGKYVELKWLGSKQ</sequence>
<reference key="1">
    <citation type="journal article" date="2003" name="Nature">
        <title>The genome sequence of the filamentous fungus Neurospora crassa.</title>
        <authorList>
            <person name="Galagan J.E."/>
            <person name="Calvo S.E."/>
            <person name="Borkovich K.A."/>
            <person name="Selker E.U."/>
            <person name="Read N.D."/>
            <person name="Jaffe D.B."/>
            <person name="FitzHugh W."/>
            <person name="Ma L.-J."/>
            <person name="Smirnov S."/>
            <person name="Purcell S."/>
            <person name="Rehman B."/>
            <person name="Elkins T."/>
            <person name="Engels R."/>
            <person name="Wang S."/>
            <person name="Nielsen C.B."/>
            <person name="Butler J."/>
            <person name="Endrizzi M."/>
            <person name="Qui D."/>
            <person name="Ianakiev P."/>
            <person name="Bell-Pedersen D."/>
            <person name="Nelson M.A."/>
            <person name="Werner-Washburne M."/>
            <person name="Selitrennikoff C.P."/>
            <person name="Kinsey J.A."/>
            <person name="Braun E.L."/>
            <person name="Zelter A."/>
            <person name="Schulte U."/>
            <person name="Kothe G.O."/>
            <person name="Jedd G."/>
            <person name="Mewes H.-W."/>
            <person name="Staben C."/>
            <person name="Marcotte E."/>
            <person name="Greenberg D."/>
            <person name="Roy A."/>
            <person name="Foley K."/>
            <person name="Naylor J."/>
            <person name="Stange-Thomann N."/>
            <person name="Barrett R."/>
            <person name="Gnerre S."/>
            <person name="Kamal M."/>
            <person name="Kamvysselis M."/>
            <person name="Mauceli E.W."/>
            <person name="Bielke C."/>
            <person name="Rudd S."/>
            <person name="Frishman D."/>
            <person name="Krystofova S."/>
            <person name="Rasmussen C."/>
            <person name="Metzenberg R.L."/>
            <person name="Perkins D.D."/>
            <person name="Kroken S."/>
            <person name="Cogoni C."/>
            <person name="Macino G."/>
            <person name="Catcheside D.E.A."/>
            <person name="Li W."/>
            <person name="Pratt R.J."/>
            <person name="Osmani S.A."/>
            <person name="DeSouza C.P.C."/>
            <person name="Glass N.L."/>
            <person name="Orbach M.J."/>
            <person name="Berglund J.A."/>
            <person name="Voelker R."/>
            <person name="Yarden O."/>
            <person name="Plamann M."/>
            <person name="Seiler S."/>
            <person name="Dunlap J.C."/>
            <person name="Radford A."/>
            <person name="Aramayo R."/>
            <person name="Natvig D.O."/>
            <person name="Alex L.A."/>
            <person name="Mannhaupt G."/>
            <person name="Ebbole D.J."/>
            <person name="Freitag M."/>
            <person name="Paulsen I."/>
            <person name="Sachs M.S."/>
            <person name="Lander E.S."/>
            <person name="Nusbaum C."/>
            <person name="Birren B.W."/>
        </authorList>
    </citation>
    <scope>NUCLEOTIDE SEQUENCE [LARGE SCALE GENOMIC DNA]</scope>
    <source>
        <strain>ATCC 24698 / 74-OR23-1A / CBS 708.71 / DSM 1257 / FGSC 987</strain>
    </source>
</reference>
<reference key="2">
    <citation type="journal article" date="2006" name="FEMS Microbiol. Lett.">
        <title>Identification and comparative analysis of the large subunit mitochondrial ribosomal proteins of Neurospora crassa.</title>
        <authorList>
            <person name="Gan X."/>
            <person name="Arita K."/>
            <person name="Isono S."/>
            <person name="Kitakawa M."/>
            <person name="Yoshino K."/>
            <person name="Yonezawa K."/>
            <person name="Kato A."/>
            <person name="Inoue H."/>
            <person name="Isono K."/>
        </authorList>
    </citation>
    <scope>IDENTIFICATION IN THE MITOCHONDRIAL RIBOSOMAL LARGE COMPLEX</scope>
    <scope>IDENTIFICATION BY MASS SPECTROMETRY</scope>
</reference>
<reference evidence="7 8" key="3">
    <citation type="journal article" date="2020" name="Nat. Commun.">
        <title>Analysis of translating mitoribosome reveals functional characteristics of translation in mitochondria of fungi.</title>
        <authorList>
            <person name="Itoh Y."/>
            <person name="Naschberger A."/>
            <person name="Mortezaei N."/>
            <person name="Herrmann J.M."/>
            <person name="Amunts A."/>
        </authorList>
    </citation>
    <scope>STRUCTURE BY ELECTRON MICROSCOPY (2.74 ANGSTROMS)</scope>
</reference>
<proteinExistence type="evidence at protein level"/>
<gene>
    <name type="primary">mrpl13</name>
    <name type="ORF">NCU05552</name>
</gene>